<proteinExistence type="evidence at protein level"/>
<dbReference type="PIR" id="A59417">
    <property type="entry name" value="A59417"/>
</dbReference>
<dbReference type="PDB" id="2A7A">
    <property type="method" value="X-ray"/>
    <property type="resolution" value="1.75 A"/>
    <property type="chains" value="A=1-237"/>
</dbReference>
<dbReference type="PDB" id="2G4I">
    <property type="method" value="X-ray"/>
    <property type="resolution" value="2.40 A"/>
    <property type="chains" value="A=1-237"/>
</dbReference>
<dbReference type="PDB" id="3QLQ">
    <property type="method" value="X-ray"/>
    <property type="resolution" value="1.70 A"/>
    <property type="chains" value="A/B/C/D=1-237"/>
</dbReference>
<dbReference type="PDB" id="4CZS">
    <property type="method" value="X-ray"/>
    <property type="resolution" value="1.73 A"/>
    <property type="chains" value="A/B/C/D=1-237"/>
</dbReference>
<dbReference type="PDBsum" id="2A7A"/>
<dbReference type="PDBsum" id="2G4I"/>
<dbReference type="PDBsum" id="3QLQ"/>
<dbReference type="PDBsum" id="4CZS"/>
<dbReference type="SMR" id="P81461"/>
<dbReference type="UniLectin" id="P81461"/>
<dbReference type="EvolutionaryTrace" id="P81461"/>
<dbReference type="GO" id="GO:0005537">
    <property type="term" value="F:D-mannose binding"/>
    <property type="evidence" value="ECO:0007669"/>
    <property type="project" value="UniProtKB-KW"/>
</dbReference>
<dbReference type="GO" id="GO:0046872">
    <property type="term" value="F:metal ion binding"/>
    <property type="evidence" value="ECO:0007669"/>
    <property type="project" value="UniProtKB-KW"/>
</dbReference>
<dbReference type="CDD" id="cd06899">
    <property type="entry name" value="lectin_legume_LecRK_Arcelin_ConA"/>
    <property type="match status" value="1"/>
</dbReference>
<dbReference type="FunFam" id="2.60.120.200:FF:000227">
    <property type="entry name" value="Concanavalin-A"/>
    <property type="match status" value="1"/>
</dbReference>
<dbReference type="Gene3D" id="2.60.120.200">
    <property type="match status" value="1"/>
</dbReference>
<dbReference type="InterPro" id="IPR013320">
    <property type="entry name" value="ConA-like_dom_sf"/>
</dbReference>
<dbReference type="InterPro" id="IPR000985">
    <property type="entry name" value="Lectin_LegA_CS"/>
</dbReference>
<dbReference type="InterPro" id="IPR019825">
    <property type="entry name" value="Lectin_legB_Mn/Ca_BS"/>
</dbReference>
<dbReference type="InterPro" id="IPR001220">
    <property type="entry name" value="Legume_lectin_dom"/>
</dbReference>
<dbReference type="InterPro" id="IPR050258">
    <property type="entry name" value="Leguminous_Lectin"/>
</dbReference>
<dbReference type="PANTHER" id="PTHR32401">
    <property type="entry name" value="CONCANAVALIN A-LIKE LECTIN FAMILY PROTEIN"/>
    <property type="match status" value="1"/>
</dbReference>
<dbReference type="PANTHER" id="PTHR32401:SF47">
    <property type="entry name" value="LEGUME LECTIN DOMAIN-CONTAINING PROTEIN"/>
    <property type="match status" value="1"/>
</dbReference>
<dbReference type="Pfam" id="PF00139">
    <property type="entry name" value="Lectin_legB"/>
    <property type="match status" value="2"/>
</dbReference>
<dbReference type="SUPFAM" id="SSF49899">
    <property type="entry name" value="Concanavalin A-like lectins/glucanases"/>
    <property type="match status" value="1"/>
</dbReference>
<dbReference type="PROSITE" id="PS00308">
    <property type="entry name" value="LECTIN_LEGUME_ALPHA"/>
    <property type="match status" value="1"/>
</dbReference>
<dbReference type="PROSITE" id="PS00307">
    <property type="entry name" value="LECTIN_LEGUME_BETA"/>
    <property type="match status" value="1"/>
</dbReference>
<accession>P81461</accession>
<name>CONA_CANCT</name>
<reference key="1">
    <citation type="journal article" date="1993" name="Phytochemistry">
        <title>Primary structures of concanavalin A-like lectins from seeds of two species of Canavalia.</title>
        <authorList>
            <person name="Fujimura S."/>
            <person name="Terada S."/>
            <person name="Jayavardhanan K.K."/>
            <person name="Panikkar K.R."/>
            <person name="Kimoto E."/>
        </authorList>
    </citation>
    <scope>PROTEIN SEQUENCE</scope>
</reference>
<reference key="2">
    <citation type="journal article" date="2007" name="Acta Crystallogr. D">
        <title>On the routine use of soft X-rays in macromolecular crystallography. Part IV. Efficient determination of anomalous substructures in biomacromolecules using longer X-ray wavelengths.</title>
        <authorList>
            <person name="Mueller-Dieckmann C."/>
            <person name="Panjikar S."/>
            <person name="Schmidt A."/>
            <person name="Mueller S."/>
            <person name="Kuper J."/>
            <person name="Geerlof A."/>
            <person name="Wilmanns M."/>
            <person name="Singh R.K."/>
            <person name="Tucker P.A."/>
            <person name="Weiss M.S."/>
        </authorList>
    </citation>
    <scope>X-RAY CRYSTALLOGRAPHY (2.4 ANGSTROMS) IN COMPLEX WITH CALCIUM AND MANGANESE IONS</scope>
</reference>
<reference key="3">
    <citation type="journal article" date="2012" name="Adv. Mater.">
        <title>Synthesis and biophysical study of disassembling nanohybrid bioconjugates with a cubix oactasilsesquioxane core.</title>
        <authorList>
            <person name="Trastoy B."/>
            <person name="Bonsor D.A."/>
            <person name="Perez-Ojeda M.E."/>
            <person name="Jimeno M.L."/>
            <person name="Mendez-Ardoy A."/>
            <person name="Fernandez J.M.G."/>
            <person name="Sundberg E.J."/>
            <person name="Chiara J.L."/>
        </authorList>
    </citation>
    <scope>X-RAY CRYSTALLOGRAPHY (1.7 ANGSTROMS) IN COMPLEX WITH CALCIUM; MANGANESE AND CARBOHYDRATE</scope>
    <scope>FUNCTION</scope>
    <scope>SUBUNIT</scope>
</reference>
<reference key="4">
    <citation type="journal article" date="2015" name="J. Am. Chem. Soc.">
        <title>Genetically encoded fragment-based discovery of glycopeptide ligands for carbohydrate-binding proteins.</title>
        <authorList>
            <person name="Ng S."/>
            <person name="Lin E."/>
            <person name="Kitov P.I."/>
            <person name="Tjhung K.F."/>
            <person name="Gerlits O.O."/>
            <person name="Deng L."/>
            <person name="Kasper B."/>
            <person name="Sood A."/>
            <person name="Paschal B.M."/>
            <person name="Zhang P."/>
            <person name="Ling C.C."/>
            <person name="Klassen J.S."/>
            <person name="Noren C.J."/>
            <person name="Mahal L.K."/>
            <person name="Woods R.J."/>
            <person name="Coates L."/>
            <person name="Derda R."/>
        </authorList>
    </citation>
    <scope>X-RAY CRYSTALLOGRAPHY (1.72 ANGSTROMS) IN COMPLEX WITH CALCIUM; MANGANESE AND GLYCOPROTEIN</scope>
    <scope>FUNCTION</scope>
    <scope>SUBUNIT</scope>
</reference>
<sequence length="237" mass="25539">ADTIVAVELDTYPNTDIGDPSYPHIGIDIKSVRSKKTAKWNMQNGKVGTAHIIYNSVGKRLSAVVSYPNGDSATVSYDVDLDNVLPEWVRVGLSASTGLYKETNTILSWSFTSKLKSNSTHETNALHFMFNQFSKDQKDLILQGDATTGTDGNLELTRVSSNGSPQGNSVGRALFYAPVHIWESSAVVASFDATFTFLIKSPDSHPADGIAFFISNIDSSIPSGSTGRLLGLFPDAN</sequence>
<feature type="chain" id="PRO_0000105088" description="Concanavalin-A">
    <location>
        <begin position="1"/>
        <end position="237"/>
    </location>
</feature>
<feature type="binding site" evidence="2 3 4 7 8 9 10">
    <location>
        <position position="8"/>
    </location>
    <ligand>
        <name>Mn(2+)</name>
        <dbReference type="ChEBI" id="CHEBI:29035"/>
    </ligand>
</feature>
<feature type="binding site" evidence="2 3 4 7 8 9 10">
    <location>
        <position position="10"/>
    </location>
    <ligand>
        <name>Ca(2+)</name>
        <dbReference type="ChEBI" id="CHEBI:29108"/>
    </ligand>
</feature>
<feature type="binding site" evidence="2 3 4 7 8 9 10">
    <location>
        <position position="10"/>
    </location>
    <ligand>
        <name>Mn(2+)</name>
        <dbReference type="ChEBI" id="CHEBI:29035"/>
    </ligand>
</feature>
<feature type="binding site" evidence="2 3 4 7 8 9 10">
    <location>
        <position position="12"/>
    </location>
    <ligand>
        <name>Ca(2+)</name>
        <dbReference type="ChEBI" id="CHEBI:29108"/>
    </ligand>
</feature>
<feature type="binding site" evidence="3 4 9 10">
    <location>
        <position position="14"/>
    </location>
    <ligand>
        <name>a carbohydrate</name>
        <dbReference type="ChEBI" id="CHEBI:16646"/>
    </ligand>
</feature>
<feature type="binding site" evidence="2 3 4 7 8 9 10">
    <location>
        <position position="14"/>
    </location>
    <ligand>
        <name>Ca(2+)</name>
        <dbReference type="ChEBI" id="CHEBI:29108"/>
    </ligand>
</feature>
<feature type="binding site" evidence="2 3 4 7 8 9 10">
    <location>
        <position position="19"/>
    </location>
    <ligand>
        <name>Ca(2+)</name>
        <dbReference type="ChEBI" id="CHEBI:29108"/>
    </ligand>
</feature>
<feature type="binding site" evidence="2 3 4 7 8 9 10">
    <location>
        <position position="19"/>
    </location>
    <ligand>
        <name>Mn(2+)</name>
        <dbReference type="ChEBI" id="CHEBI:29035"/>
    </ligand>
</feature>
<feature type="binding site" evidence="2 3 4 7 8 9 10">
    <location>
        <position position="24"/>
    </location>
    <ligand>
        <name>Mn(2+)</name>
        <dbReference type="ChEBI" id="CHEBI:29035"/>
    </ligand>
</feature>
<feature type="binding site" evidence="3 4 9 10">
    <location>
        <begin position="98"/>
        <end position="100"/>
    </location>
    <ligand>
        <name>a carbohydrate</name>
        <dbReference type="ChEBI" id="CHEBI:16646"/>
    </ligand>
</feature>
<feature type="binding site" evidence="3 4 9 10">
    <location>
        <position position="208"/>
    </location>
    <ligand>
        <name>a carbohydrate</name>
        <dbReference type="ChEBI" id="CHEBI:16646"/>
    </ligand>
</feature>
<feature type="binding site" evidence="3 4 9 10">
    <location>
        <position position="228"/>
    </location>
    <ligand>
        <name>a carbohydrate</name>
        <dbReference type="ChEBI" id="CHEBI:16646"/>
    </ligand>
</feature>
<feature type="strand" evidence="11">
    <location>
        <begin position="4"/>
        <end position="10"/>
    </location>
</feature>
<feature type="helix" evidence="11">
    <location>
        <begin position="15"/>
        <end position="17"/>
    </location>
</feature>
<feature type="strand" evidence="11">
    <location>
        <begin position="24"/>
        <end position="33"/>
    </location>
</feature>
<feature type="strand" evidence="11">
    <location>
        <begin position="35"/>
        <end position="39"/>
    </location>
</feature>
<feature type="strand" evidence="11">
    <location>
        <begin position="46"/>
        <end position="55"/>
    </location>
</feature>
<feature type="turn" evidence="11">
    <location>
        <begin position="56"/>
        <end position="59"/>
    </location>
</feature>
<feature type="strand" evidence="11">
    <location>
        <begin position="60"/>
        <end position="66"/>
    </location>
</feature>
<feature type="strand" evidence="11">
    <location>
        <begin position="73"/>
        <end position="78"/>
    </location>
</feature>
<feature type="helix" evidence="11">
    <location>
        <begin position="81"/>
        <end position="83"/>
    </location>
</feature>
<feature type="strand" evidence="11">
    <location>
        <begin position="87"/>
        <end position="96"/>
    </location>
</feature>
<feature type="strand" evidence="12">
    <location>
        <begin position="98"/>
        <end position="100"/>
    </location>
</feature>
<feature type="strand" evidence="11">
    <location>
        <begin position="105"/>
        <end position="118"/>
    </location>
</feature>
<feature type="strand" evidence="11">
    <location>
        <begin position="123"/>
        <end position="132"/>
    </location>
</feature>
<feature type="strand" evidence="11">
    <location>
        <begin position="140"/>
        <end position="144"/>
    </location>
</feature>
<feature type="helix" evidence="11">
    <location>
        <begin position="150"/>
        <end position="152"/>
    </location>
</feature>
<feature type="strand" evidence="12">
    <location>
        <begin position="154"/>
        <end position="157"/>
    </location>
</feature>
<feature type="strand" evidence="11">
    <location>
        <begin position="170"/>
        <end position="177"/>
    </location>
</feature>
<feature type="strand" evidence="11">
    <location>
        <begin position="186"/>
        <end position="198"/>
    </location>
</feature>
<feature type="strand" evidence="11">
    <location>
        <begin position="202"/>
        <end position="205"/>
    </location>
</feature>
<feature type="strand" evidence="11">
    <location>
        <begin position="209"/>
        <end position="215"/>
    </location>
</feature>
<feature type="helix" evidence="11">
    <location>
        <begin position="227"/>
        <end position="229"/>
    </location>
</feature>
<feature type="turn" evidence="11">
    <location>
        <begin position="230"/>
        <end position="232"/>
    </location>
</feature>
<comment type="function">
    <text evidence="3 4">Glucose/D-mannose specific lectin.</text>
</comment>
<comment type="subunit">
    <text evidence="3 4">Homotetramer.</text>
</comment>
<comment type="PTM">
    <text evidence="1 5">Concanavalin A-like lectins of the Diocleinae subtribe undergo proteolytic processing referred to as circular permutation. The propeptide is split into an N-terminal and a C-terminal part, the gamma and beta chain, respectively. These are then religated in beta-gamma order to form the mature alpha chain. The beta and gamma chains can often be detected in cell extracts (By similarity). Residues 1-118 of the mature chain, as displayed here, probably constitute the beta chain in the propeptide, residues 119-237 the gamma chain (Probable).</text>
</comment>
<comment type="miscellaneous">
    <text evidence="6">Binds one manganese (or another transition metal) ion and one calcium ion. The metal ions are essential for the saccharide-binding and cell-agglutinating activities.</text>
</comment>
<comment type="similarity">
    <text evidence="5">Belongs to the leguminous lectin family.</text>
</comment>
<organism>
    <name type="scientific">Canavalia cathartica</name>
    <name type="common">Jackbean</name>
    <name type="synonym">Canavalia virosa</name>
    <dbReference type="NCBI Taxonomy" id="28958"/>
    <lineage>
        <taxon>Eukaryota</taxon>
        <taxon>Viridiplantae</taxon>
        <taxon>Streptophyta</taxon>
        <taxon>Embryophyta</taxon>
        <taxon>Tracheophyta</taxon>
        <taxon>Spermatophyta</taxon>
        <taxon>Magnoliopsida</taxon>
        <taxon>eudicotyledons</taxon>
        <taxon>Gunneridae</taxon>
        <taxon>Pentapetalae</taxon>
        <taxon>rosids</taxon>
        <taxon>fabids</taxon>
        <taxon>Fabales</taxon>
        <taxon>Fabaceae</taxon>
        <taxon>Papilionoideae</taxon>
        <taxon>50 kb inversion clade</taxon>
        <taxon>NPAAA clade</taxon>
        <taxon>indigoferoid/millettioid clade</taxon>
        <taxon>Phaseoleae</taxon>
        <taxon>Canavalia</taxon>
    </lineage>
</organism>
<keyword id="KW-0002">3D-structure</keyword>
<keyword id="KW-0106">Calcium</keyword>
<keyword id="KW-0903">Direct protein sequencing</keyword>
<keyword id="KW-0430">Lectin</keyword>
<keyword id="KW-0464">Manganese</keyword>
<keyword id="KW-0465">Mannose-binding</keyword>
<keyword id="KW-0479">Metal-binding</keyword>
<evidence type="ECO:0000250" key="1">
    <source>
        <dbReference type="UniProtKB" id="C0HK27"/>
    </source>
</evidence>
<evidence type="ECO:0000269" key="2">
    <source>
    </source>
</evidence>
<evidence type="ECO:0000269" key="3">
    <source>
    </source>
</evidence>
<evidence type="ECO:0000269" key="4">
    <source ref="3"/>
</evidence>
<evidence type="ECO:0000305" key="5"/>
<evidence type="ECO:0000305" key="6">
    <source>
    </source>
</evidence>
<evidence type="ECO:0007744" key="7">
    <source>
        <dbReference type="PDB" id="2A7A"/>
    </source>
</evidence>
<evidence type="ECO:0007744" key="8">
    <source>
        <dbReference type="PDB" id="2G4I"/>
    </source>
</evidence>
<evidence type="ECO:0007744" key="9">
    <source>
        <dbReference type="PDB" id="3QLQ"/>
    </source>
</evidence>
<evidence type="ECO:0007744" key="10">
    <source>
        <dbReference type="PDB" id="4CZS"/>
    </source>
</evidence>
<evidence type="ECO:0007829" key="11">
    <source>
        <dbReference type="PDB" id="3QLQ"/>
    </source>
</evidence>
<evidence type="ECO:0007829" key="12">
    <source>
        <dbReference type="PDB" id="4CZS"/>
    </source>
</evidence>
<protein>
    <recommendedName>
        <fullName>Concanavalin-A</fullName>
        <shortName>Con A</shortName>
    </recommendedName>
</protein>